<name>LNTA_LISMO</name>
<feature type="signal peptide" evidence="1">
    <location>
        <begin position="1"/>
        <end position="36"/>
    </location>
</feature>
<feature type="chain" id="PRO_0000409775" description="Listeria nuclear targeted protein A">
    <location>
        <begin position="37"/>
        <end position="205"/>
    </location>
</feature>
<feature type="helix" evidence="4">
    <location>
        <begin position="63"/>
        <end position="89"/>
    </location>
</feature>
<feature type="helix" evidence="4">
    <location>
        <begin position="97"/>
        <end position="118"/>
    </location>
</feature>
<feature type="helix" evidence="4">
    <location>
        <begin position="122"/>
        <end position="125"/>
    </location>
</feature>
<feature type="helix" evidence="4">
    <location>
        <begin position="127"/>
        <end position="129"/>
    </location>
</feature>
<feature type="helix" evidence="4">
    <location>
        <begin position="132"/>
        <end position="158"/>
    </location>
</feature>
<feature type="turn" evidence="4">
    <location>
        <begin position="159"/>
        <end position="161"/>
    </location>
</feature>
<feature type="helix" evidence="4">
    <location>
        <begin position="164"/>
        <end position="172"/>
    </location>
</feature>
<feature type="strand" evidence="3">
    <location>
        <begin position="173"/>
        <end position="175"/>
    </location>
</feature>
<feature type="helix" evidence="4">
    <location>
        <begin position="176"/>
        <end position="194"/>
    </location>
</feature>
<dbReference type="EMBL" id="AL591975">
    <property type="protein sequence ID" value="CAC98517.1"/>
    <property type="molecule type" value="Genomic_DNA"/>
</dbReference>
<dbReference type="PIR" id="AG1129">
    <property type="entry name" value="AG1129"/>
</dbReference>
<dbReference type="RefSeq" id="NP_463967.1">
    <property type="nucleotide sequence ID" value="NC_003210.1"/>
</dbReference>
<dbReference type="RefSeq" id="WP_010989465.1">
    <property type="nucleotide sequence ID" value="NZ_CP149495.1"/>
</dbReference>
<dbReference type="PDB" id="2XL4">
    <property type="method" value="X-ray"/>
    <property type="resolution" value="2.30 A"/>
    <property type="chains" value="A=34-205"/>
</dbReference>
<dbReference type="PDB" id="4CIH">
    <property type="method" value="X-ray"/>
    <property type="resolution" value="2.22 A"/>
    <property type="chains" value="A/B/C/D=56-205"/>
</dbReference>
<dbReference type="PDBsum" id="2XL4"/>
<dbReference type="PDBsum" id="4CIH"/>
<dbReference type="SMR" id="Q8Y9T5"/>
<dbReference type="STRING" id="169963.gene:17593089"/>
<dbReference type="PaxDb" id="169963-lmo0438"/>
<dbReference type="EnsemblBacteria" id="CAC98517">
    <property type="protein sequence ID" value="CAC98517"/>
    <property type="gene ID" value="CAC98517"/>
</dbReference>
<dbReference type="GeneID" id="985161"/>
<dbReference type="KEGG" id="lmo:lmo0438"/>
<dbReference type="HOGENOM" id="CLU_1336149_0_0_9"/>
<dbReference type="EvolutionaryTrace" id="Q8Y9T5"/>
<dbReference type="Proteomes" id="UP000000817">
    <property type="component" value="Chromosome"/>
</dbReference>
<dbReference type="GO" id="GO:0005576">
    <property type="term" value="C:extracellular region"/>
    <property type="evidence" value="ECO:0000314"/>
    <property type="project" value="CACAO"/>
</dbReference>
<dbReference type="GO" id="GO:0042025">
    <property type="term" value="C:host cell nucleus"/>
    <property type="evidence" value="ECO:0000314"/>
    <property type="project" value="CACAO"/>
</dbReference>
<dbReference type="GO" id="GO:0039579">
    <property type="term" value="P:symbiont-mediated suppression of host ISG15-protein conjugation"/>
    <property type="evidence" value="ECO:0000269"/>
    <property type="project" value="SigSci"/>
</dbReference>
<dbReference type="FunFam" id="1.20.120.1420:FF:000001">
    <property type="entry name" value="Nuclear targeted protein LntA"/>
    <property type="match status" value="1"/>
</dbReference>
<dbReference type="Gene3D" id="1.20.120.1420">
    <property type="entry name" value="LntA helical domain"/>
    <property type="match status" value="1"/>
</dbReference>
<dbReference type="InterPro" id="IPR054607">
    <property type="entry name" value="LntA_helical"/>
</dbReference>
<dbReference type="InterPro" id="IPR043113">
    <property type="entry name" value="LntA_helix"/>
</dbReference>
<dbReference type="Pfam" id="PF22390">
    <property type="entry name" value="LntA_helical"/>
    <property type="match status" value="1"/>
</dbReference>
<gene>
    <name type="primary">lntA</name>
    <name type="ordered locus">lmo0438</name>
</gene>
<evidence type="ECO:0000255" key="1"/>
<evidence type="ECO:0000269" key="2">
    <source>
    </source>
</evidence>
<evidence type="ECO:0007829" key="3">
    <source>
        <dbReference type="PDB" id="2XL4"/>
    </source>
</evidence>
<evidence type="ECO:0007829" key="4">
    <source>
        <dbReference type="PDB" id="4CIH"/>
    </source>
</evidence>
<organism>
    <name type="scientific">Listeria monocytogenes serovar 1/2a (strain ATCC BAA-679 / EGD-e)</name>
    <dbReference type="NCBI Taxonomy" id="169963"/>
    <lineage>
        <taxon>Bacteria</taxon>
        <taxon>Bacillati</taxon>
        <taxon>Bacillota</taxon>
        <taxon>Bacilli</taxon>
        <taxon>Bacillales</taxon>
        <taxon>Listeriaceae</taxon>
        <taxon>Listeria</taxon>
    </lineage>
</organism>
<accession>Q8Y9T5</accession>
<sequence>MKKLVAWFNGLSKMWKVVVIIGAVFVVIIALTTGEDEGEQTKTKKDSNKVVKTASRPKLSTKDLALIKADLAEFEARELSSEKILKDTIKEESWSDLDFANDNINQMIGTMKRYQQEILSIDAIKRSSEASADTEAFKKIFKEWSEFKIERIQVTIDLLNGKKDSEAVFKKTYPNQIIFKKVRTNKLQTALNNLKVGYELLDSQK</sequence>
<keyword id="KW-0002">3D-structure</keyword>
<keyword id="KW-1048">Host nucleus</keyword>
<keyword id="KW-1185">Reference proteome</keyword>
<keyword id="KW-0964">Secreted</keyword>
<keyword id="KW-0732">Signal</keyword>
<keyword id="KW-0843">Virulence</keyword>
<protein>
    <recommendedName>
        <fullName>Listeria nuclear targeted protein A</fullName>
    </recommendedName>
</protein>
<comment type="function">
    <text evidence="2">Relieves the repression of host cell immune response genes (interferon-stimulated genes) by blocking the recruitment of host BAHD1 to these genes. May modulate interferon-mediated immune response to control bacterial colonization of the host.</text>
</comment>
<comment type="subunit">
    <text evidence="2">Interacts specifically with host BAHD1.</text>
</comment>
<comment type="subcellular location">
    <subcellularLocation>
        <location evidence="2">Secreted</location>
    </subcellularLocation>
    <subcellularLocation>
        <location evidence="2">Host nucleus</location>
    </subcellularLocation>
</comment>
<comment type="induction">
    <text evidence="2">Induced in infected host cells. Expression is regulated by PrfA and sigma-B factor (SigB).</text>
</comment>
<comment type="disruption phenotype">
    <text evidence="2">Deletion of lntA leads to a decrease in bacterial colonization of spleens and livers, as well as blood bacteraemia.</text>
</comment>
<reference key="1">
    <citation type="journal article" date="2001" name="Science">
        <title>Comparative genomics of Listeria species.</title>
        <authorList>
            <person name="Glaser P."/>
            <person name="Frangeul L."/>
            <person name="Buchrieser C."/>
            <person name="Rusniok C."/>
            <person name="Amend A."/>
            <person name="Baquero F."/>
            <person name="Berche P."/>
            <person name="Bloecker H."/>
            <person name="Brandt P."/>
            <person name="Chakraborty T."/>
            <person name="Charbit A."/>
            <person name="Chetouani F."/>
            <person name="Couve E."/>
            <person name="de Daruvar A."/>
            <person name="Dehoux P."/>
            <person name="Domann E."/>
            <person name="Dominguez-Bernal G."/>
            <person name="Duchaud E."/>
            <person name="Durant L."/>
            <person name="Dussurget O."/>
            <person name="Entian K.-D."/>
            <person name="Fsihi H."/>
            <person name="Garcia-del Portillo F."/>
            <person name="Garrido P."/>
            <person name="Gautier L."/>
            <person name="Goebel W."/>
            <person name="Gomez-Lopez N."/>
            <person name="Hain T."/>
            <person name="Hauf J."/>
            <person name="Jackson D."/>
            <person name="Jones L.-M."/>
            <person name="Kaerst U."/>
            <person name="Kreft J."/>
            <person name="Kuhn M."/>
            <person name="Kunst F."/>
            <person name="Kurapkat G."/>
            <person name="Madueno E."/>
            <person name="Maitournam A."/>
            <person name="Mata Vicente J."/>
            <person name="Ng E."/>
            <person name="Nedjari H."/>
            <person name="Nordsiek G."/>
            <person name="Novella S."/>
            <person name="de Pablos B."/>
            <person name="Perez-Diaz J.-C."/>
            <person name="Purcell R."/>
            <person name="Remmel B."/>
            <person name="Rose M."/>
            <person name="Schlueter T."/>
            <person name="Simoes N."/>
            <person name="Tierrez A."/>
            <person name="Vazquez-Boland J.-A."/>
            <person name="Voss H."/>
            <person name="Wehland J."/>
            <person name="Cossart P."/>
        </authorList>
    </citation>
    <scope>NUCLEOTIDE SEQUENCE [LARGE SCALE GENOMIC DNA]</scope>
    <source>
        <strain>ATCC BAA-679 / EGD-e</strain>
    </source>
</reference>
<reference key="2">
    <citation type="journal article" date="2011" name="Science">
        <title>A bacterial protein targets the BAHD1 chromatin complex to stimulate type III interferon response.</title>
        <authorList>
            <person name="Lebreton A."/>
            <person name="Lakisic G."/>
            <person name="Job V."/>
            <person name="Fritsch L."/>
            <person name="Tham T.N."/>
            <person name="Camejo A."/>
            <person name="Mattei P.J."/>
            <person name="Regnault B."/>
            <person name="Nahori M.A."/>
            <person name="Cabanes D."/>
            <person name="Gautreau A."/>
            <person name="Ait-Si-Ali S."/>
            <person name="Dessen A."/>
            <person name="Cossart P."/>
            <person name="Bierne H."/>
        </authorList>
    </citation>
    <scope>X-RAY CRYSTALLOGRAPHY (2.3 ANGSTROMS) OF 34-205</scope>
    <scope>FUNCTION</scope>
    <scope>INTERACTION WITH BAHD1</scope>
    <scope>SUBCELLULAR LOCATION</scope>
    <scope>INDUCTION</scope>
    <scope>DISRUPTION PHENOTYPE</scope>
</reference>
<proteinExistence type="evidence at protein level"/>